<keyword id="KW-0687">Ribonucleoprotein</keyword>
<keyword id="KW-0689">Ribosomal protein</keyword>
<dbReference type="EMBL" id="CP001344">
    <property type="protein sequence ID" value="ACL43694.1"/>
    <property type="molecule type" value="Genomic_DNA"/>
</dbReference>
<dbReference type="SMR" id="B8HMS9"/>
<dbReference type="STRING" id="395961.Cyan7425_1317"/>
<dbReference type="KEGG" id="cyn:Cyan7425_1317"/>
<dbReference type="eggNOG" id="COG0203">
    <property type="taxonomic scope" value="Bacteria"/>
</dbReference>
<dbReference type="HOGENOM" id="CLU_074407_2_2_3"/>
<dbReference type="OrthoDB" id="9809073at2"/>
<dbReference type="GO" id="GO:0022625">
    <property type="term" value="C:cytosolic large ribosomal subunit"/>
    <property type="evidence" value="ECO:0007669"/>
    <property type="project" value="TreeGrafter"/>
</dbReference>
<dbReference type="GO" id="GO:0003735">
    <property type="term" value="F:structural constituent of ribosome"/>
    <property type="evidence" value="ECO:0007669"/>
    <property type="project" value="InterPro"/>
</dbReference>
<dbReference type="GO" id="GO:0006412">
    <property type="term" value="P:translation"/>
    <property type="evidence" value="ECO:0007669"/>
    <property type="project" value="UniProtKB-UniRule"/>
</dbReference>
<dbReference type="FunFam" id="3.90.1030.10:FF:000001">
    <property type="entry name" value="50S ribosomal protein L17"/>
    <property type="match status" value="1"/>
</dbReference>
<dbReference type="Gene3D" id="3.90.1030.10">
    <property type="entry name" value="Ribosomal protein L17"/>
    <property type="match status" value="1"/>
</dbReference>
<dbReference type="HAMAP" id="MF_01368">
    <property type="entry name" value="Ribosomal_bL17"/>
    <property type="match status" value="1"/>
</dbReference>
<dbReference type="InterPro" id="IPR000456">
    <property type="entry name" value="Ribosomal_bL17"/>
</dbReference>
<dbReference type="InterPro" id="IPR047859">
    <property type="entry name" value="Ribosomal_bL17_CS"/>
</dbReference>
<dbReference type="InterPro" id="IPR036373">
    <property type="entry name" value="Ribosomal_bL17_sf"/>
</dbReference>
<dbReference type="NCBIfam" id="TIGR00059">
    <property type="entry name" value="L17"/>
    <property type="match status" value="1"/>
</dbReference>
<dbReference type="PANTHER" id="PTHR14413:SF16">
    <property type="entry name" value="LARGE RIBOSOMAL SUBUNIT PROTEIN BL17M"/>
    <property type="match status" value="1"/>
</dbReference>
<dbReference type="PANTHER" id="PTHR14413">
    <property type="entry name" value="RIBOSOMAL PROTEIN L17"/>
    <property type="match status" value="1"/>
</dbReference>
<dbReference type="Pfam" id="PF01196">
    <property type="entry name" value="Ribosomal_L17"/>
    <property type="match status" value="1"/>
</dbReference>
<dbReference type="SUPFAM" id="SSF64263">
    <property type="entry name" value="Prokaryotic ribosomal protein L17"/>
    <property type="match status" value="1"/>
</dbReference>
<dbReference type="PROSITE" id="PS01167">
    <property type="entry name" value="RIBOSOMAL_L17"/>
    <property type="match status" value="1"/>
</dbReference>
<reference key="1">
    <citation type="journal article" date="2011" name="MBio">
        <title>Novel metabolic attributes of the genus Cyanothece, comprising a group of unicellular nitrogen-fixing Cyanobacteria.</title>
        <authorList>
            <person name="Bandyopadhyay A."/>
            <person name="Elvitigala T."/>
            <person name="Welsh E."/>
            <person name="Stockel J."/>
            <person name="Liberton M."/>
            <person name="Min H."/>
            <person name="Sherman L.A."/>
            <person name="Pakrasi H.B."/>
        </authorList>
    </citation>
    <scope>NUCLEOTIDE SEQUENCE [LARGE SCALE GENOMIC DNA]</scope>
    <source>
        <strain>PCC 7425 / ATCC 29141</strain>
    </source>
</reference>
<sequence>MRHRCRVPRLGKPADQRKALLRALTTELIRHGRITTTKVRAKAVRSEVDRMITLAKDGSLAARRQALGYLYDPQLVGALFEQASARYGQRQGGYTRIIRTIPRRGDNAEMAIIELV</sequence>
<feature type="chain" id="PRO_1000184016" description="Large ribosomal subunit protein bL17">
    <location>
        <begin position="1"/>
        <end position="116"/>
    </location>
</feature>
<name>RL17_CYAP4</name>
<accession>B8HMS9</accession>
<evidence type="ECO:0000255" key="1">
    <source>
        <dbReference type="HAMAP-Rule" id="MF_01368"/>
    </source>
</evidence>
<evidence type="ECO:0000305" key="2"/>
<gene>
    <name evidence="1" type="primary">rplQ</name>
    <name evidence="1" type="synonym">rpl17</name>
    <name type="ordered locus">Cyan7425_1317</name>
</gene>
<proteinExistence type="inferred from homology"/>
<comment type="subunit">
    <text evidence="1">Part of the 50S ribosomal subunit. Contacts protein L32.</text>
</comment>
<comment type="similarity">
    <text evidence="1">Belongs to the bacterial ribosomal protein bL17 family.</text>
</comment>
<organism>
    <name type="scientific">Cyanothece sp. (strain PCC 7425 / ATCC 29141)</name>
    <dbReference type="NCBI Taxonomy" id="395961"/>
    <lineage>
        <taxon>Bacteria</taxon>
        <taxon>Bacillati</taxon>
        <taxon>Cyanobacteriota</taxon>
        <taxon>Cyanophyceae</taxon>
        <taxon>Gomontiellales</taxon>
        <taxon>Cyanothecaceae</taxon>
        <taxon>Cyanothece</taxon>
    </lineage>
</organism>
<protein>
    <recommendedName>
        <fullName evidence="1">Large ribosomal subunit protein bL17</fullName>
    </recommendedName>
    <alternativeName>
        <fullName evidence="2">50S ribosomal protein L17</fullName>
    </alternativeName>
</protein>